<name>RS4_THEAB</name>
<sequence>MARYTGPQCKLCRREGMKLYLKGERCFTDKCAFDRRPFAPGDHGRDKKKLTQYGIQLRAKQTMKRIYGVLETQFRRYYETASRKSGDTRENLVVQVERRLDNVVYRLGFAVNRTTARQLVNHGHVLVNGRKVTIPSYQVRPGDVIEIREKSRDILPVKNAIELNKDKNTMPWLTVDYENYKGTYERNPKLEEVIDLPVDVQAIIELYSR</sequence>
<proteinExistence type="inferred from homology"/>
<gene>
    <name evidence="1" type="primary">rpsD</name>
    <name type="ordered locus">THA_1241</name>
</gene>
<reference key="1">
    <citation type="journal article" date="2009" name="J. Bacteriol.">
        <title>The genome of Thermosipho africanus TCF52B: lateral genetic connections to the Firmicutes and Archaea.</title>
        <authorList>
            <person name="Nesboe C.L."/>
            <person name="Bapteste E."/>
            <person name="Curtis B."/>
            <person name="Dahle H."/>
            <person name="Lopez P."/>
            <person name="Macleod D."/>
            <person name="Dlutek M."/>
            <person name="Bowman S."/>
            <person name="Zhaxybayeva O."/>
            <person name="Birkeland N.-K."/>
            <person name="Doolittle W.F."/>
        </authorList>
    </citation>
    <scope>NUCLEOTIDE SEQUENCE [LARGE SCALE GENOMIC DNA]</scope>
    <source>
        <strain>TCF52B</strain>
    </source>
</reference>
<accession>B7IHX2</accession>
<dbReference type="EMBL" id="CP001185">
    <property type="protein sequence ID" value="ACJ75686.1"/>
    <property type="molecule type" value="Genomic_DNA"/>
</dbReference>
<dbReference type="RefSeq" id="WP_004101494.1">
    <property type="nucleotide sequence ID" value="NC_011653.1"/>
</dbReference>
<dbReference type="SMR" id="B7IHX2"/>
<dbReference type="STRING" id="484019.THA_1241"/>
<dbReference type="KEGG" id="taf:THA_1241"/>
<dbReference type="eggNOG" id="COG0522">
    <property type="taxonomic scope" value="Bacteria"/>
</dbReference>
<dbReference type="HOGENOM" id="CLU_092403_0_2_0"/>
<dbReference type="OrthoDB" id="9803672at2"/>
<dbReference type="Proteomes" id="UP000002453">
    <property type="component" value="Chromosome"/>
</dbReference>
<dbReference type="GO" id="GO:0015935">
    <property type="term" value="C:small ribosomal subunit"/>
    <property type="evidence" value="ECO:0007669"/>
    <property type="project" value="InterPro"/>
</dbReference>
<dbReference type="GO" id="GO:0019843">
    <property type="term" value="F:rRNA binding"/>
    <property type="evidence" value="ECO:0007669"/>
    <property type="project" value="UniProtKB-UniRule"/>
</dbReference>
<dbReference type="GO" id="GO:0003735">
    <property type="term" value="F:structural constituent of ribosome"/>
    <property type="evidence" value="ECO:0007669"/>
    <property type="project" value="InterPro"/>
</dbReference>
<dbReference type="GO" id="GO:0042274">
    <property type="term" value="P:ribosomal small subunit biogenesis"/>
    <property type="evidence" value="ECO:0007669"/>
    <property type="project" value="TreeGrafter"/>
</dbReference>
<dbReference type="GO" id="GO:0006412">
    <property type="term" value="P:translation"/>
    <property type="evidence" value="ECO:0007669"/>
    <property type="project" value="UniProtKB-UniRule"/>
</dbReference>
<dbReference type="CDD" id="cd00165">
    <property type="entry name" value="S4"/>
    <property type="match status" value="1"/>
</dbReference>
<dbReference type="FunFam" id="1.10.1050.10:FF:000001">
    <property type="entry name" value="30S ribosomal protein S4"/>
    <property type="match status" value="1"/>
</dbReference>
<dbReference type="FunFam" id="3.10.290.10:FF:000001">
    <property type="entry name" value="30S ribosomal protein S4"/>
    <property type="match status" value="1"/>
</dbReference>
<dbReference type="Gene3D" id="1.10.1050.10">
    <property type="entry name" value="Ribosomal Protein S4 Delta 41, Chain A, domain 1"/>
    <property type="match status" value="1"/>
</dbReference>
<dbReference type="Gene3D" id="3.10.290.10">
    <property type="entry name" value="RNA-binding S4 domain"/>
    <property type="match status" value="1"/>
</dbReference>
<dbReference type="HAMAP" id="MF_01306_B">
    <property type="entry name" value="Ribosomal_uS4_B"/>
    <property type="match status" value="1"/>
</dbReference>
<dbReference type="InterPro" id="IPR022801">
    <property type="entry name" value="Ribosomal_uS4"/>
</dbReference>
<dbReference type="InterPro" id="IPR005709">
    <property type="entry name" value="Ribosomal_uS4_bac-type"/>
</dbReference>
<dbReference type="InterPro" id="IPR001912">
    <property type="entry name" value="Ribosomal_uS4_N"/>
</dbReference>
<dbReference type="InterPro" id="IPR002942">
    <property type="entry name" value="S4_RNA-bd"/>
</dbReference>
<dbReference type="InterPro" id="IPR036986">
    <property type="entry name" value="S4_RNA-bd_sf"/>
</dbReference>
<dbReference type="NCBIfam" id="NF003717">
    <property type="entry name" value="PRK05327.1"/>
    <property type="match status" value="1"/>
</dbReference>
<dbReference type="NCBIfam" id="TIGR01017">
    <property type="entry name" value="rpsD_bact"/>
    <property type="match status" value="1"/>
</dbReference>
<dbReference type="PANTHER" id="PTHR11831">
    <property type="entry name" value="30S 40S RIBOSOMAL PROTEIN"/>
    <property type="match status" value="1"/>
</dbReference>
<dbReference type="PANTHER" id="PTHR11831:SF4">
    <property type="entry name" value="SMALL RIBOSOMAL SUBUNIT PROTEIN US4M"/>
    <property type="match status" value="1"/>
</dbReference>
<dbReference type="Pfam" id="PF00163">
    <property type="entry name" value="Ribosomal_S4"/>
    <property type="match status" value="1"/>
</dbReference>
<dbReference type="Pfam" id="PF01479">
    <property type="entry name" value="S4"/>
    <property type="match status" value="1"/>
</dbReference>
<dbReference type="SMART" id="SM01390">
    <property type="entry name" value="Ribosomal_S4"/>
    <property type="match status" value="1"/>
</dbReference>
<dbReference type="SMART" id="SM00363">
    <property type="entry name" value="S4"/>
    <property type="match status" value="1"/>
</dbReference>
<dbReference type="SUPFAM" id="SSF55174">
    <property type="entry name" value="Alpha-L RNA-binding motif"/>
    <property type="match status" value="1"/>
</dbReference>
<dbReference type="PROSITE" id="PS50889">
    <property type="entry name" value="S4"/>
    <property type="match status" value="1"/>
</dbReference>
<protein>
    <recommendedName>
        <fullName evidence="1">Small ribosomal subunit protein uS4</fullName>
    </recommendedName>
    <alternativeName>
        <fullName evidence="2">30S ribosomal protein S4</fullName>
    </alternativeName>
</protein>
<keyword id="KW-1185">Reference proteome</keyword>
<keyword id="KW-0687">Ribonucleoprotein</keyword>
<keyword id="KW-0689">Ribosomal protein</keyword>
<keyword id="KW-0694">RNA-binding</keyword>
<keyword id="KW-0699">rRNA-binding</keyword>
<organism>
    <name type="scientific">Thermosipho africanus (strain TCF52B)</name>
    <dbReference type="NCBI Taxonomy" id="484019"/>
    <lineage>
        <taxon>Bacteria</taxon>
        <taxon>Thermotogati</taxon>
        <taxon>Thermotogota</taxon>
        <taxon>Thermotogae</taxon>
        <taxon>Thermotogales</taxon>
        <taxon>Fervidobacteriaceae</taxon>
        <taxon>Thermosipho</taxon>
    </lineage>
</organism>
<evidence type="ECO:0000255" key="1">
    <source>
        <dbReference type="HAMAP-Rule" id="MF_01306"/>
    </source>
</evidence>
<evidence type="ECO:0000305" key="2"/>
<comment type="function">
    <text evidence="1">One of the primary rRNA binding proteins, it binds directly to 16S rRNA where it nucleates assembly of the body of the 30S subunit.</text>
</comment>
<comment type="function">
    <text evidence="1">With S5 and S12 plays an important role in translational accuracy.</text>
</comment>
<comment type="subunit">
    <text evidence="1">Part of the 30S ribosomal subunit. Contacts protein S5. The interaction surface between S4 and S5 is involved in control of translational fidelity.</text>
</comment>
<comment type="similarity">
    <text evidence="1">Belongs to the universal ribosomal protein uS4 family.</text>
</comment>
<feature type="chain" id="PRO_1000140805" description="Small ribosomal subunit protein uS4">
    <location>
        <begin position="1"/>
        <end position="209"/>
    </location>
</feature>
<feature type="domain" description="S4 RNA-binding" evidence="1">
    <location>
        <begin position="98"/>
        <end position="164"/>
    </location>
</feature>